<sequence length="217" mass="23661">MTTIAIVDYGVGNLRSVAQALRAAAPEADVRVVDAPEGIRSADRVVLPGQGAMPDCMSALGASGLQEAVIEAAASKPMFGVCVGEQMLFESSSEARPGTDKTPCLGLMPGEVIRFELDGMTQPDGSRYKVPQMGWNRVKQSRPHPLWDGIPDESWFYFVHSYFVRAQDPAHIAGETEYGVVFTSAVARDNIFATQFHPEKSAAMGLQLYRNFVHWNP</sequence>
<protein>
    <recommendedName>
        <fullName evidence="1">Imidazole glycerol phosphate synthase subunit HisH</fullName>
        <ecNumber evidence="1">4.3.2.10</ecNumber>
    </recommendedName>
    <alternativeName>
        <fullName evidence="1">IGP synthase glutaminase subunit</fullName>
        <ecNumber evidence="1">3.5.1.2</ecNumber>
    </alternativeName>
    <alternativeName>
        <fullName evidence="1">IGP synthase subunit HisH</fullName>
    </alternativeName>
    <alternativeName>
        <fullName evidence="1">ImGP synthase subunit HisH</fullName>
        <shortName evidence="1">IGPS subunit HisH</shortName>
    </alternativeName>
</protein>
<organism>
    <name type="scientific">Cupriavidus pinatubonensis (strain JMP 134 / LMG 1197)</name>
    <name type="common">Cupriavidus necator (strain JMP 134)</name>
    <dbReference type="NCBI Taxonomy" id="264198"/>
    <lineage>
        <taxon>Bacteria</taxon>
        <taxon>Pseudomonadati</taxon>
        <taxon>Pseudomonadota</taxon>
        <taxon>Betaproteobacteria</taxon>
        <taxon>Burkholderiales</taxon>
        <taxon>Burkholderiaceae</taxon>
        <taxon>Cupriavidus</taxon>
    </lineage>
</organism>
<reference key="1">
    <citation type="journal article" date="2010" name="PLoS ONE">
        <title>The complete multipartite genome sequence of Cupriavidus necator JMP134, a versatile pollutant degrader.</title>
        <authorList>
            <person name="Lykidis A."/>
            <person name="Perez-Pantoja D."/>
            <person name="Ledger T."/>
            <person name="Mavromatis K."/>
            <person name="Anderson I.J."/>
            <person name="Ivanova N.N."/>
            <person name="Hooper S.D."/>
            <person name="Lapidus A."/>
            <person name="Lucas S."/>
            <person name="Gonzalez B."/>
            <person name="Kyrpides N.C."/>
        </authorList>
    </citation>
    <scope>NUCLEOTIDE SEQUENCE [LARGE SCALE GENOMIC DNA]</scope>
    <source>
        <strain>JMP134 / LMG 1197</strain>
    </source>
</reference>
<evidence type="ECO:0000255" key="1">
    <source>
        <dbReference type="HAMAP-Rule" id="MF_00278"/>
    </source>
</evidence>
<comment type="function">
    <text evidence="1">IGPS catalyzes the conversion of PRFAR and glutamine to IGP, AICAR and glutamate. The HisH subunit catalyzes the hydrolysis of glutamine to glutamate and ammonia as part of the synthesis of IGP and AICAR. The resulting ammonia molecule is channeled to the active site of HisF.</text>
</comment>
<comment type="catalytic activity">
    <reaction evidence="1">
        <text>5-[(5-phospho-1-deoxy-D-ribulos-1-ylimino)methylamino]-1-(5-phospho-beta-D-ribosyl)imidazole-4-carboxamide + L-glutamine = D-erythro-1-(imidazol-4-yl)glycerol 3-phosphate + 5-amino-1-(5-phospho-beta-D-ribosyl)imidazole-4-carboxamide + L-glutamate + H(+)</text>
        <dbReference type="Rhea" id="RHEA:24793"/>
        <dbReference type="ChEBI" id="CHEBI:15378"/>
        <dbReference type="ChEBI" id="CHEBI:29985"/>
        <dbReference type="ChEBI" id="CHEBI:58278"/>
        <dbReference type="ChEBI" id="CHEBI:58359"/>
        <dbReference type="ChEBI" id="CHEBI:58475"/>
        <dbReference type="ChEBI" id="CHEBI:58525"/>
        <dbReference type="EC" id="4.3.2.10"/>
    </reaction>
</comment>
<comment type="catalytic activity">
    <reaction evidence="1">
        <text>L-glutamine + H2O = L-glutamate + NH4(+)</text>
        <dbReference type="Rhea" id="RHEA:15889"/>
        <dbReference type="ChEBI" id="CHEBI:15377"/>
        <dbReference type="ChEBI" id="CHEBI:28938"/>
        <dbReference type="ChEBI" id="CHEBI:29985"/>
        <dbReference type="ChEBI" id="CHEBI:58359"/>
        <dbReference type="EC" id="3.5.1.2"/>
    </reaction>
</comment>
<comment type="pathway">
    <text evidence="1">Amino-acid biosynthesis; L-histidine biosynthesis; L-histidine from 5-phospho-alpha-D-ribose 1-diphosphate: step 5/9.</text>
</comment>
<comment type="subunit">
    <text evidence="1">Heterodimer of HisH and HisF.</text>
</comment>
<comment type="subcellular location">
    <subcellularLocation>
        <location evidence="1">Cytoplasm</location>
    </subcellularLocation>
</comment>
<keyword id="KW-0028">Amino-acid biosynthesis</keyword>
<keyword id="KW-0963">Cytoplasm</keyword>
<keyword id="KW-0315">Glutamine amidotransferase</keyword>
<keyword id="KW-0368">Histidine biosynthesis</keyword>
<keyword id="KW-0378">Hydrolase</keyword>
<keyword id="KW-0456">Lyase</keyword>
<name>HIS5_CUPPJ</name>
<feature type="chain" id="PRO_0000231753" description="Imidazole glycerol phosphate synthase subunit HisH">
    <location>
        <begin position="1"/>
        <end position="217"/>
    </location>
</feature>
<feature type="domain" description="Glutamine amidotransferase type-1" evidence="1">
    <location>
        <begin position="3"/>
        <end position="217"/>
    </location>
</feature>
<feature type="active site" description="Nucleophile" evidence="1">
    <location>
        <position position="82"/>
    </location>
</feature>
<feature type="active site" evidence="1">
    <location>
        <position position="197"/>
    </location>
</feature>
<feature type="active site" evidence="1">
    <location>
        <position position="199"/>
    </location>
</feature>
<gene>
    <name evidence="1" type="primary">hisH</name>
    <name type="ordered locus">Reut_A3107</name>
</gene>
<accession>Q46WL6</accession>
<proteinExistence type="inferred from homology"/>
<dbReference type="EC" id="4.3.2.10" evidence="1"/>
<dbReference type="EC" id="3.5.1.2" evidence="1"/>
<dbReference type="EMBL" id="CP000090">
    <property type="protein sequence ID" value="AAZ62467.1"/>
    <property type="molecule type" value="Genomic_DNA"/>
</dbReference>
<dbReference type="SMR" id="Q46WL6"/>
<dbReference type="STRING" id="264198.Reut_A3107"/>
<dbReference type="KEGG" id="reu:Reut_A3107"/>
<dbReference type="eggNOG" id="COG0118">
    <property type="taxonomic scope" value="Bacteria"/>
</dbReference>
<dbReference type="HOGENOM" id="CLU_071837_2_0_4"/>
<dbReference type="OrthoDB" id="9807137at2"/>
<dbReference type="UniPathway" id="UPA00031">
    <property type="reaction ID" value="UER00010"/>
</dbReference>
<dbReference type="GO" id="GO:0005737">
    <property type="term" value="C:cytoplasm"/>
    <property type="evidence" value="ECO:0007669"/>
    <property type="project" value="UniProtKB-SubCell"/>
</dbReference>
<dbReference type="GO" id="GO:0004359">
    <property type="term" value="F:glutaminase activity"/>
    <property type="evidence" value="ECO:0007669"/>
    <property type="project" value="UniProtKB-EC"/>
</dbReference>
<dbReference type="GO" id="GO:0000107">
    <property type="term" value="F:imidazoleglycerol-phosphate synthase activity"/>
    <property type="evidence" value="ECO:0007669"/>
    <property type="project" value="UniProtKB-UniRule"/>
</dbReference>
<dbReference type="GO" id="GO:0016829">
    <property type="term" value="F:lyase activity"/>
    <property type="evidence" value="ECO:0007669"/>
    <property type="project" value="UniProtKB-KW"/>
</dbReference>
<dbReference type="GO" id="GO:0000105">
    <property type="term" value="P:L-histidine biosynthetic process"/>
    <property type="evidence" value="ECO:0007669"/>
    <property type="project" value="UniProtKB-UniRule"/>
</dbReference>
<dbReference type="CDD" id="cd01748">
    <property type="entry name" value="GATase1_IGP_Synthase"/>
    <property type="match status" value="1"/>
</dbReference>
<dbReference type="Gene3D" id="3.40.50.880">
    <property type="match status" value="1"/>
</dbReference>
<dbReference type="HAMAP" id="MF_00278">
    <property type="entry name" value="HisH"/>
    <property type="match status" value="1"/>
</dbReference>
<dbReference type="InterPro" id="IPR029062">
    <property type="entry name" value="Class_I_gatase-like"/>
</dbReference>
<dbReference type="InterPro" id="IPR017926">
    <property type="entry name" value="GATASE"/>
</dbReference>
<dbReference type="InterPro" id="IPR010139">
    <property type="entry name" value="Imidazole-glycPsynth_HisH"/>
</dbReference>
<dbReference type="NCBIfam" id="TIGR01855">
    <property type="entry name" value="IMP_synth_hisH"/>
    <property type="match status" value="1"/>
</dbReference>
<dbReference type="PANTHER" id="PTHR42701">
    <property type="entry name" value="IMIDAZOLE GLYCEROL PHOSPHATE SYNTHASE SUBUNIT HISH"/>
    <property type="match status" value="1"/>
</dbReference>
<dbReference type="PANTHER" id="PTHR42701:SF2">
    <property type="entry name" value="IMIDAZOLE GLYCEROL PHOSPHATE SYNTHASE SUBUNIT HISH 1"/>
    <property type="match status" value="1"/>
</dbReference>
<dbReference type="Pfam" id="PF00117">
    <property type="entry name" value="GATase"/>
    <property type="match status" value="1"/>
</dbReference>
<dbReference type="PIRSF" id="PIRSF000495">
    <property type="entry name" value="Amidotransf_hisH"/>
    <property type="match status" value="1"/>
</dbReference>
<dbReference type="SUPFAM" id="SSF52317">
    <property type="entry name" value="Class I glutamine amidotransferase-like"/>
    <property type="match status" value="1"/>
</dbReference>
<dbReference type="PROSITE" id="PS51273">
    <property type="entry name" value="GATASE_TYPE_1"/>
    <property type="match status" value="1"/>
</dbReference>